<sequence length="345" mass="36872">MTDKTSLSYKDAGVDIDAGNALVGRIKGVVKKTRRPEVMGGLGGFGALCALPQKYREPVLVSGTDGVGTKLRLAMDLKRHDTIGIDLVAMCVNDLVVQGAEPLFFLDYYATGKLDVDTASAVISGIAEGCLQSGCSLVGGETAEMPGMYHGEDYDVAGFCVGVVEKSEIIDGSKVSDGDVLIALGSSGPHSNGYSLVRKILEVSGCDPQTTELDGKPLADHLLAPTRIYVKSVLKLIEKVDVHAIAHLTGGGFWENIPRVLPDNTQAVIDESSWQWPEVFNWLQTAGNVERHEMYRTFNCGVGMIIALPAPEVDKALALLNANGENAWKIGIIKASDSEQRVVIE</sequence>
<organism>
    <name type="scientific">Escherichia coli O6:K15:H31 (strain 536 / UPEC)</name>
    <dbReference type="NCBI Taxonomy" id="362663"/>
    <lineage>
        <taxon>Bacteria</taxon>
        <taxon>Pseudomonadati</taxon>
        <taxon>Pseudomonadota</taxon>
        <taxon>Gammaproteobacteria</taxon>
        <taxon>Enterobacterales</taxon>
        <taxon>Enterobacteriaceae</taxon>
        <taxon>Escherichia</taxon>
    </lineage>
</organism>
<keyword id="KW-0067">ATP-binding</keyword>
<keyword id="KW-0963">Cytoplasm</keyword>
<keyword id="KW-0436">Ligase</keyword>
<keyword id="KW-0547">Nucleotide-binding</keyword>
<keyword id="KW-0658">Purine biosynthesis</keyword>
<reference key="1">
    <citation type="journal article" date="2006" name="Mol. Microbiol.">
        <title>Role of pathogenicity island-associated integrases in the genome plasticity of uropathogenic Escherichia coli strain 536.</title>
        <authorList>
            <person name="Hochhut B."/>
            <person name="Wilde C."/>
            <person name="Balling G."/>
            <person name="Middendorf B."/>
            <person name="Dobrindt U."/>
            <person name="Brzuszkiewicz E."/>
            <person name="Gottschalk G."/>
            <person name="Carniel E."/>
            <person name="Hacker J."/>
        </authorList>
    </citation>
    <scope>NUCLEOTIDE SEQUENCE [LARGE SCALE GENOMIC DNA]</scope>
    <source>
        <strain>536 / UPEC</strain>
    </source>
</reference>
<protein>
    <recommendedName>
        <fullName evidence="2">Phosphoribosylformylglycinamidine cyclo-ligase</fullName>
        <ecNumber evidence="2">6.3.3.1</ecNumber>
    </recommendedName>
    <alternativeName>
        <fullName evidence="2">AIR synthase</fullName>
    </alternativeName>
    <alternativeName>
        <fullName evidence="2">AIRS</fullName>
    </alternativeName>
    <alternativeName>
        <fullName evidence="2">Phosphoribosyl-aminoimidazole synthetase</fullName>
    </alternativeName>
</protein>
<gene>
    <name evidence="2" type="primary">purM</name>
    <name type="ordered locus">ECP_2501</name>
</gene>
<accession>Q0TEY9</accession>
<evidence type="ECO:0000250" key="1"/>
<evidence type="ECO:0000255" key="2">
    <source>
        <dbReference type="HAMAP-Rule" id="MF_00741"/>
    </source>
</evidence>
<name>PUR5_ECOL5</name>
<feature type="initiator methionine" description="Removed" evidence="1">
    <location>
        <position position="1"/>
    </location>
</feature>
<feature type="chain" id="PRO_0000258355" description="Phosphoribosylformylglycinamidine cyclo-ligase">
    <location>
        <begin position="2"/>
        <end position="345"/>
    </location>
</feature>
<comment type="catalytic activity">
    <reaction evidence="2">
        <text>2-formamido-N(1)-(5-O-phospho-beta-D-ribosyl)acetamidine + ATP = 5-amino-1-(5-phospho-beta-D-ribosyl)imidazole + ADP + phosphate + H(+)</text>
        <dbReference type="Rhea" id="RHEA:23032"/>
        <dbReference type="ChEBI" id="CHEBI:15378"/>
        <dbReference type="ChEBI" id="CHEBI:30616"/>
        <dbReference type="ChEBI" id="CHEBI:43474"/>
        <dbReference type="ChEBI" id="CHEBI:137981"/>
        <dbReference type="ChEBI" id="CHEBI:147287"/>
        <dbReference type="ChEBI" id="CHEBI:456216"/>
        <dbReference type="EC" id="6.3.3.1"/>
    </reaction>
</comment>
<comment type="pathway">
    <text evidence="2">Purine metabolism; IMP biosynthesis via de novo pathway; 5-amino-1-(5-phospho-D-ribosyl)imidazole from N(2)-formyl-N(1)-(5-phospho-D-ribosyl)glycinamide: step 2/2.</text>
</comment>
<comment type="subcellular location">
    <subcellularLocation>
        <location evidence="2">Cytoplasm</location>
    </subcellularLocation>
</comment>
<comment type="similarity">
    <text evidence="2">Belongs to the AIR synthase family.</text>
</comment>
<proteinExistence type="inferred from homology"/>
<dbReference type="EC" id="6.3.3.1" evidence="2"/>
<dbReference type="EMBL" id="CP000247">
    <property type="protein sequence ID" value="ABG70490.1"/>
    <property type="molecule type" value="Genomic_DNA"/>
</dbReference>
<dbReference type="RefSeq" id="WP_001296287.1">
    <property type="nucleotide sequence ID" value="NC_008253.1"/>
</dbReference>
<dbReference type="SMR" id="Q0TEY9"/>
<dbReference type="KEGG" id="ecp:ECP_2501"/>
<dbReference type="HOGENOM" id="CLU_047116_0_0_6"/>
<dbReference type="UniPathway" id="UPA00074">
    <property type="reaction ID" value="UER00129"/>
</dbReference>
<dbReference type="Proteomes" id="UP000009182">
    <property type="component" value="Chromosome"/>
</dbReference>
<dbReference type="GO" id="GO:0005829">
    <property type="term" value="C:cytosol"/>
    <property type="evidence" value="ECO:0007669"/>
    <property type="project" value="TreeGrafter"/>
</dbReference>
<dbReference type="GO" id="GO:0005524">
    <property type="term" value="F:ATP binding"/>
    <property type="evidence" value="ECO:0007669"/>
    <property type="project" value="UniProtKB-KW"/>
</dbReference>
<dbReference type="GO" id="GO:0004637">
    <property type="term" value="F:phosphoribosylamine-glycine ligase activity"/>
    <property type="evidence" value="ECO:0007669"/>
    <property type="project" value="TreeGrafter"/>
</dbReference>
<dbReference type="GO" id="GO:0004641">
    <property type="term" value="F:phosphoribosylformylglycinamidine cyclo-ligase activity"/>
    <property type="evidence" value="ECO:0007669"/>
    <property type="project" value="UniProtKB-UniRule"/>
</dbReference>
<dbReference type="GO" id="GO:0006189">
    <property type="term" value="P:'de novo' IMP biosynthetic process"/>
    <property type="evidence" value="ECO:0007669"/>
    <property type="project" value="UniProtKB-UniRule"/>
</dbReference>
<dbReference type="GO" id="GO:0046084">
    <property type="term" value="P:adenine biosynthetic process"/>
    <property type="evidence" value="ECO:0007669"/>
    <property type="project" value="TreeGrafter"/>
</dbReference>
<dbReference type="CDD" id="cd02196">
    <property type="entry name" value="PurM"/>
    <property type="match status" value="1"/>
</dbReference>
<dbReference type="FunFam" id="3.30.1330.10:FF:000001">
    <property type="entry name" value="Phosphoribosylformylglycinamidine cyclo-ligase"/>
    <property type="match status" value="1"/>
</dbReference>
<dbReference type="FunFam" id="3.90.650.10:FF:000001">
    <property type="entry name" value="Phosphoribosylformylglycinamidine cyclo-ligase"/>
    <property type="match status" value="1"/>
</dbReference>
<dbReference type="Gene3D" id="3.90.650.10">
    <property type="entry name" value="PurM-like C-terminal domain"/>
    <property type="match status" value="1"/>
</dbReference>
<dbReference type="Gene3D" id="3.30.1330.10">
    <property type="entry name" value="PurM-like, N-terminal domain"/>
    <property type="match status" value="1"/>
</dbReference>
<dbReference type="HAMAP" id="MF_00741">
    <property type="entry name" value="AIRS"/>
    <property type="match status" value="1"/>
</dbReference>
<dbReference type="InterPro" id="IPR010918">
    <property type="entry name" value="PurM-like_C_dom"/>
</dbReference>
<dbReference type="InterPro" id="IPR036676">
    <property type="entry name" value="PurM-like_C_sf"/>
</dbReference>
<dbReference type="InterPro" id="IPR016188">
    <property type="entry name" value="PurM-like_N"/>
</dbReference>
<dbReference type="InterPro" id="IPR036921">
    <property type="entry name" value="PurM-like_N_sf"/>
</dbReference>
<dbReference type="InterPro" id="IPR004733">
    <property type="entry name" value="PurM_cligase"/>
</dbReference>
<dbReference type="NCBIfam" id="TIGR00878">
    <property type="entry name" value="purM"/>
    <property type="match status" value="1"/>
</dbReference>
<dbReference type="PANTHER" id="PTHR10520:SF12">
    <property type="entry name" value="TRIFUNCTIONAL PURINE BIOSYNTHETIC PROTEIN ADENOSINE-3"/>
    <property type="match status" value="1"/>
</dbReference>
<dbReference type="PANTHER" id="PTHR10520">
    <property type="entry name" value="TRIFUNCTIONAL PURINE BIOSYNTHETIC PROTEIN ADENOSINE-3-RELATED"/>
    <property type="match status" value="1"/>
</dbReference>
<dbReference type="Pfam" id="PF00586">
    <property type="entry name" value="AIRS"/>
    <property type="match status" value="1"/>
</dbReference>
<dbReference type="Pfam" id="PF02769">
    <property type="entry name" value="AIRS_C"/>
    <property type="match status" value="1"/>
</dbReference>
<dbReference type="SUPFAM" id="SSF56042">
    <property type="entry name" value="PurM C-terminal domain-like"/>
    <property type="match status" value="1"/>
</dbReference>
<dbReference type="SUPFAM" id="SSF55326">
    <property type="entry name" value="PurM N-terminal domain-like"/>
    <property type="match status" value="1"/>
</dbReference>